<keyword id="KW-0687">Ribonucleoprotein</keyword>
<keyword id="KW-0689">Ribosomal protein</keyword>
<name>RL35_EHRRG</name>
<gene>
    <name evidence="1" type="primary">rpmI</name>
    <name type="ordered locus">ERGA_CDS_01300</name>
</gene>
<comment type="similarity">
    <text evidence="1">Belongs to the bacterial ribosomal protein bL35 family.</text>
</comment>
<protein>
    <recommendedName>
        <fullName evidence="1">Large ribosomal subunit protein bL35</fullName>
    </recommendedName>
    <alternativeName>
        <fullName evidence="3">50S ribosomal protein L35</fullName>
    </alternativeName>
</protein>
<organism>
    <name type="scientific">Ehrlichia ruminantium (strain Gardel)</name>
    <dbReference type="NCBI Taxonomy" id="302409"/>
    <lineage>
        <taxon>Bacteria</taxon>
        <taxon>Pseudomonadati</taxon>
        <taxon>Pseudomonadota</taxon>
        <taxon>Alphaproteobacteria</taxon>
        <taxon>Rickettsiales</taxon>
        <taxon>Anaplasmataceae</taxon>
        <taxon>Ehrlichia</taxon>
    </lineage>
</organism>
<evidence type="ECO:0000255" key="1">
    <source>
        <dbReference type="HAMAP-Rule" id="MF_00514"/>
    </source>
</evidence>
<evidence type="ECO:0000256" key="2">
    <source>
        <dbReference type="SAM" id="MobiDB-lite"/>
    </source>
</evidence>
<evidence type="ECO:0000305" key="3"/>
<reference key="1">
    <citation type="journal article" date="2006" name="J. Bacteriol.">
        <title>Comparative genomic analysis of three strains of Ehrlichia ruminantium reveals an active process of genome size plasticity.</title>
        <authorList>
            <person name="Frutos R."/>
            <person name="Viari A."/>
            <person name="Ferraz C."/>
            <person name="Morgat A."/>
            <person name="Eychenie S."/>
            <person name="Kandassamy Y."/>
            <person name="Chantal I."/>
            <person name="Bensaid A."/>
            <person name="Coissac E."/>
            <person name="Vachiery N."/>
            <person name="Demaille J."/>
            <person name="Martinez D."/>
        </authorList>
    </citation>
    <scope>NUCLEOTIDE SEQUENCE [LARGE SCALE GENOMIC DNA]</scope>
    <source>
        <strain>Gardel</strain>
    </source>
</reference>
<accession>Q5FH68</accession>
<feature type="chain" id="PRO_0000258675" description="Large ribosomal subunit protein bL35">
    <location>
        <begin position="1"/>
        <end position="66"/>
    </location>
</feature>
<feature type="region of interest" description="Disordered" evidence="2">
    <location>
        <begin position="18"/>
        <end position="41"/>
    </location>
</feature>
<feature type="compositionally biased region" description="Polar residues" evidence="2">
    <location>
        <begin position="18"/>
        <end position="27"/>
    </location>
</feature>
<feature type="compositionally biased region" description="Basic residues" evidence="2">
    <location>
        <begin position="28"/>
        <end position="41"/>
    </location>
</feature>
<proteinExistence type="inferred from homology"/>
<sequence>MPKLKTKSSVKKRFSVTATGKIKSTQSAKRHGMTKRSKRSIRVQRGTTVMNQSDSRIIKLFMPYSR</sequence>
<dbReference type="EMBL" id="CR925677">
    <property type="protein sequence ID" value="CAI27582.1"/>
    <property type="molecule type" value="Genomic_DNA"/>
</dbReference>
<dbReference type="RefSeq" id="WP_011154822.1">
    <property type="nucleotide sequence ID" value="NC_006831.1"/>
</dbReference>
<dbReference type="SMR" id="Q5FH68"/>
<dbReference type="GeneID" id="33058228"/>
<dbReference type="KEGG" id="erg:ERGA_CDS_01300"/>
<dbReference type="HOGENOM" id="CLU_169643_2_1_5"/>
<dbReference type="OrthoDB" id="9804851at2"/>
<dbReference type="Proteomes" id="UP000000533">
    <property type="component" value="Chromosome"/>
</dbReference>
<dbReference type="GO" id="GO:0022625">
    <property type="term" value="C:cytosolic large ribosomal subunit"/>
    <property type="evidence" value="ECO:0007669"/>
    <property type="project" value="TreeGrafter"/>
</dbReference>
<dbReference type="GO" id="GO:0003735">
    <property type="term" value="F:structural constituent of ribosome"/>
    <property type="evidence" value="ECO:0007669"/>
    <property type="project" value="InterPro"/>
</dbReference>
<dbReference type="GO" id="GO:0006412">
    <property type="term" value="P:translation"/>
    <property type="evidence" value="ECO:0007669"/>
    <property type="project" value="UniProtKB-UniRule"/>
</dbReference>
<dbReference type="FunFam" id="4.10.410.60:FF:000001">
    <property type="entry name" value="50S ribosomal protein L35"/>
    <property type="match status" value="1"/>
</dbReference>
<dbReference type="Gene3D" id="4.10.410.60">
    <property type="match status" value="1"/>
</dbReference>
<dbReference type="HAMAP" id="MF_00514">
    <property type="entry name" value="Ribosomal_bL35"/>
    <property type="match status" value="1"/>
</dbReference>
<dbReference type="InterPro" id="IPR001706">
    <property type="entry name" value="Ribosomal_bL35"/>
</dbReference>
<dbReference type="InterPro" id="IPR021137">
    <property type="entry name" value="Ribosomal_bL35-like"/>
</dbReference>
<dbReference type="InterPro" id="IPR018265">
    <property type="entry name" value="Ribosomal_bL35_CS"/>
</dbReference>
<dbReference type="InterPro" id="IPR037229">
    <property type="entry name" value="Ribosomal_bL35_sf"/>
</dbReference>
<dbReference type="NCBIfam" id="TIGR00001">
    <property type="entry name" value="rpmI_bact"/>
    <property type="match status" value="1"/>
</dbReference>
<dbReference type="PANTHER" id="PTHR33343">
    <property type="entry name" value="54S RIBOSOMAL PROTEIN BL35M"/>
    <property type="match status" value="1"/>
</dbReference>
<dbReference type="PANTHER" id="PTHR33343:SF1">
    <property type="entry name" value="LARGE RIBOSOMAL SUBUNIT PROTEIN BL35M"/>
    <property type="match status" value="1"/>
</dbReference>
<dbReference type="Pfam" id="PF01632">
    <property type="entry name" value="Ribosomal_L35p"/>
    <property type="match status" value="1"/>
</dbReference>
<dbReference type="PRINTS" id="PR00064">
    <property type="entry name" value="RIBOSOMALL35"/>
</dbReference>
<dbReference type="SUPFAM" id="SSF143034">
    <property type="entry name" value="L35p-like"/>
    <property type="match status" value="1"/>
</dbReference>
<dbReference type="PROSITE" id="PS00936">
    <property type="entry name" value="RIBOSOMAL_L35"/>
    <property type="match status" value="1"/>
</dbReference>